<accession>F8W3X3</accession>
<accession>A0A140LG84</accession>
<accession>A0A8M1NJM2</accession>
<accession>A0A8M2BGV1</accession>
<accession>A0A9K3Y6L2</accession>
<organism>
    <name type="scientific">Danio rerio</name>
    <name type="common">Zebrafish</name>
    <name type="synonym">Brachydanio rerio</name>
    <dbReference type="NCBI Taxonomy" id="7955"/>
    <lineage>
        <taxon>Eukaryota</taxon>
        <taxon>Metazoa</taxon>
        <taxon>Chordata</taxon>
        <taxon>Craniata</taxon>
        <taxon>Vertebrata</taxon>
        <taxon>Euteleostomi</taxon>
        <taxon>Actinopterygii</taxon>
        <taxon>Neopterygii</taxon>
        <taxon>Teleostei</taxon>
        <taxon>Ostariophysi</taxon>
        <taxon>Cypriniformes</taxon>
        <taxon>Danionidae</taxon>
        <taxon>Danioninae</taxon>
        <taxon>Danio</taxon>
    </lineage>
</organism>
<gene>
    <name evidence="17" type="primary">pcdh19</name>
</gene>
<proteinExistence type="evidence at protein level"/>
<evidence type="ECO:0000255" key="1"/>
<evidence type="ECO:0000255" key="2">
    <source>
        <dbReference type="PROSITE-ProRule" id="PRU00043"/>
    </source>
</evidence>
<evidence type="ECO:0000255" key="3">
    <source>
        <dbReference type="PROSITE-ProRule" id="PRU00498"/>
    </source>
</evidence>
<evidence type="ECO:0000256" key="4">
    <source>
        <dbReference type="SAM" id="MobiDB-lite"/>
    </source>
</evidence>
<evidence type="ECO:0000269" key="5">
    <source>
    </source>
</evidence>
<evidence type="ECO:0000269" key="6">
    <source>
    </source>
</evidence>
<evidence type="ECO:0000269" key="7">
    <source>
    </source>
</evidence>
<evidence type="ECO:0000269" key="8">
    <source>
    </source>
</evidence>
<evidence type="ECO:0000269" key="9">
    <source>
    </source>
</evidence>
<evidence type="ECO:0000269" key="10">
    <source>
    </source>
</evidence>
<evidence type="ECO:0000269" key="11">
    <source>
    </source>
</evidence>
<evidence type="ECO:0000269" key="12">
    <source>
    </source>
</evidence>
<evidence type="ECO:0000269" key="13">
    <source>
    </source>
</evidence>
<evidence type="ECO:0000269" key="14">
    <source>
    </source>
</evidence>
<evidence type="ECO:0000305" key="15"/>
<evidence type="ECO:0000312" key="16">
    <source>
        <dbReference type="PDB" id="6PGW"/>
    </source>
</evidence>
<evidence type="ECO:0000312" key="17">
    <source>
        <dbReference type="ZFIN" id="ZDB-GENE-030131-4218"/>
    </source>
</evidence>
<evidence type="ECO:0007744" key="18">
    <source>
        <dbReference type="PDB" id="5CO1"/>
    </source>
</evidence>
<evidence type="ECO:0007744" key="19">
    <source>
        <dbReference type="PDB" id="5IU9"/>
    </source>
</evidence>
<evidence type="ECO:0007744" key="20">
    <source>
        <dbReference type="PDB" id="6PGW"/>
    </source>
</evidence>
<evidence type="ECO:0007829" key="21">
    <source>
        <dbReference type="PDB" id="5CO1"/>
    </source>
</evidence>
<evidence type="ECO:0007829" key="22">
    <source>
        <dbReference type="PDB" id="6PGW"/>
    </source>
</evidence>
<feature type="signal peptide" evidence="1">
    <location>
        <begin position="1"/>
        <end position="24"/>
    </location>
</feature>
<feature type="chain" id="PRO_5007311408" description="Protocadherin-19" evidence="1">
    <location>
        <begin position="25"/>
        <end position="1088"/>
    </location>
</feature>
<feature type="topological domain" description="Extracellular" evidence="15">
    <location>
        <begin position="25"/>
        <end position="678"/>
    </location>
</feature>
<feature type="transmembrane region" description="Helical" evidence="1">
    <location>
        <begin position="679"/>
        <end position="699"/>
    </location>
</feature>
<feature type="topological domain" description="Cytoplasmic" evidence="15">
    <location>
        <begin position="700"/>
        <end position="1088"/>
    </location>
</feature>
<feature type="domain" description="Cadherin 1" evidence="2">
    <location>
        <begin position="31"/>
        <end position="130"/>
    </location>
</feature>
<feature type="domain" description="Cadherin 2" evidence="2">
    <location>
        <begin position="131"/>
        <end position="239"/>
    </location>
</feature>
<feature type="domain" description="Cadherin 3" evidence="2">
    <location>
        <begin position="240"/>
        <end position="347"/>
    </location>
</feature>
<feature type="domain" description="Cadherin 4" evidence="2">
    <location>
        <begin position="351"/>
        <end position="454"/>
    </location>
</feature>
<feature type="domain" description="Cadherin 5" evidence="2">
    <location>
        <begin position="455"/>
        <end position="563"/>
    </location>
</feature>
<feature type="domain" description="Cadherin 6" evidence="2">
    <location>
        <begin position="569"/>
        <end position="676"/>
    </location>
</feature>
<feature type="region of interest" description="Disordered" evidence="4">
    <location>
        <begin position="792"/>
        <end position="813"/>
    </location>
</feature>
<feature type="region of interest" description="Disordered" evidence="4">
    <location>
        <begin position="851"/>
        <end position="875"/>
    </location>
</feature>
<feature type="region of interest" description="Disordered" evidence="4">
    <location>
        <begin position="970"/>
        <end position="1032"/>
    </location>
</feature>
<feature type="region of interest" description="Disordered" evidence="4">
    <location>
        <begin position="1067"/>
        <end position="1088"/>
    </location>
</feature>
<feature type="compositionally biased region" description="Basic and acidic residues" evidence="4">
    <location>
        <begin position="859"/>
        <end position="875"/>
    </location>
</feature>
<feature type="compositionally biased region" description="Basic and acidic residues" evidence="4">
    <location>
        <begin position="1071"/>
        <end position="1088"/>
    </location>
</feature>
<feature type="binding site" evidence="11 19">
    <location>
        <position position="34"/>
    </location>
    <ligand>
        <name>Ca(2+)</name>
        <dbReference type="ChEBI" id="CHEBI:29108"/>
        <label>1</label>
    </ligand>
</feature>
<feature type="binding site" evidence="11 19">
    <location>
        <position position="34"/>
    </location>
    <ligand>
        <name>Ca(2+)</name>
        <dbReference type="ChEBI" id="CHEBI:29108"/>
        <label>2</label>
    </ligand>
</feature>
<feature type="binding site" evidence="11 19">
    <location>
        <position position="35"/>
    </location>
    <ligand>
        <name>Ca(2+)</name>
        <dbReference type="ChEBI" id="CHEBI:29108"/>
        <label>1</label>
    </ligand>
</feature>
<feature type="binding site" evidence="11 19">
    <location>
        <position position="89"/>
    </location>
    <ligand>
        <name>Ca(2+)</name>
        <dbReference type="ChEBI" id="CHEBI:29108"/>
        <label>1</label>
    </ligand>
</feature>
<feature type="binding site" evidence="11 19">
    <location>
        <position position="91"/>
    </location>
    <ligand>
        <name>Ca(2+)</name>
        <dbReference type="ChEBI" id="CHEBI:29108"/>
        <label>1</label>
    </ligand>
</feature>
<feature type="binding site" evidence="11 19">
    <location>
        <position position="91"/>
    </location>
    <ligand>
        <name>Ca(2+)</name>
        <dbReference type="ChEBI" id="CHEBI:29108"/>
        <label>2</label>
    </ligand>
</feature>
<feature type="binding site" evidence="11 19">
    <location>
        <position position="122"/>
    </location>
    <ligand>
        <name>Ca(2+)</name>
        <dbReference type="ChEBI" id="CHEBI:29108"/>
        <label>2</label>
    </ligand>
</feature>
<feature type="binding site" evidence="11 19">
    <location>
        <position position="123"/>
    </location>
    <ligand>
        <name>Ca(2+)</name>
        <dbReference type="ChEBI" id="CHEBI:29108"/>
        <label>2</label>
    </ligand>
</feature>
<feature type="binding site" evidence="11 19">
    <location>
        <position position="124"/>
    </location>
    <ligand>
        <name>Ca(2+)</name>
        <dbReference type="ChEBI" id="CHEBI:29108"/>
        <label>3</label>
    </ligand>
</feature>
<feature type="binding site" evidence="11 19">
    <location>
        <position position="125"/>
    </location>
    <ligand>
        <name>Ca(2+)</name>
        <dbReference type="ChEBI" id="CHEBI:29108"/>
        <label>1</label>
    </ligand>
</feature>
<feature type="binding site" evidence="11 19">
    <location>
        <position position="125"/>
    </location>
    <ligand>
        <name>Ca(2+)</name>
        <dbReference type="ChEBI" id="CHEBI:29108"/>
        <label>2</label>
    </ligand>
</feature>
<feature type="binding site" evidence="11 19">
    <location>
        <position position="126"/>
    </location>
    <ligand>
        <name>Ca(2+)</name>
        <dbReference type="ChEBI" id="CHEBI:29108"/>
        <label>3</label>
    </ligand>
</feature>
<feature type="binding site" evidence="11 19">
    <location>
        <position position="141"/>
    </location>
    <ligand>
        <name>Ca(2+)</name>
        <dbReference type="ChEBI" id="CHEBI:29108"/>
        <label>4</label>
    </ligand>
</feature>
<feature type="binding site" evidence="11 19">
    <location>
        <position position="141"/>
    </location>
    <ligand>
        <name>Ca(2+)</name>
        <dbReference type="ChEBI" id="CHEBI:29108"/>
        <label>5</label>
    </ligand>
</feature>
<feature type="binding site" evidence="11 19">
    <location>
        <position position="156"/>
    </location>
    <ligand>
        <name>Ca(2+)</name>
        <dbReference type="ChEBI" id="CHEBI:29108"/>
        <label>3</label>
    </ligand>
</feature>
<feature type="binding site" evidence="11 19">
    <location>
        <position position="158"/>
    </location>
    <ligand>
        <name>Ca(2+)</name>
        <dbReference type="ChEBI" id="CHEBI:29108"/>
        <label>2</label>
    </ligand>
</feature>
<feature type="binding site" evidence="11 19">
    <location>
        <position position="158"/>
    </location>
    <ligand>
        <name>Ca(2+)</name>
        <dbReference type="ChEBI" id="CHEBI:29108"/>
        <label>3</label>
    </ligand>
</feature>
<feature type="binding site" evidence="11 19">
    <location>
        <position position="162"/>
    </location>
    <ligand>
        <name>Ca(2+)</name>
        <dbReference type="ChEBI" id="CHEBI:29108"/>
        <label>3</label>
    </ligand>
</feature>
<feature type="binding site" evidence="11 19">
    <location>
        <position position="200"/>
    </location>
    <ligand>
        <name>Ca(2+)</name>
        <dbReference type="ChEBI" id="CHEBI:29108"/>
        <label>4</label>
    </ligand>
</feature>
<feature type="binding site" evidence="11 19">
    <location>
        <position position="200"/>
    </location>
    <ligand>
        <name>Ca(2+)</name>
        <dbReference type="ChEBI" id="CHEBI:29108"/>
        <label>5</label>
    </ligand>
</feature>
<feature type="binding site" evidence="11 19">
    <location>
        <position position="213"/>
    </location>
    <ligand>
        <name>Ca(2+)</name>
        <dbReference type="ChEBI" id="CHEBI:29108"/>
        <label>3</label>
    </ligand>
</feature>
<feature type="binding site" evidence="11 19">
    <location>
        <position position="231"/>
    </location>
    <ligand>
        <name>Ca(2+)</name>
        <dbReference type="ChEBI" id="CHEBI:29108"/>
        <label>5</label>
    </ligand>
</feature>
<feature type="binding site" evidence="11 19">
    <location>
        <position position="232"/>
    </location>
    <ligand>
        <name>Ca(2+)</name>
        <dbReference type="ChEBI" id="CHEBI:29108"/>
        <label>5</label>
    </ligand>
</feature>
<feature type="binding site" evidence="11 19">
    <location>
        <position position="233"/>
    </location>
    <ligand>
        <name>Ca(2+)</name>
        <dbReference type="ChEBI" id="CHEBI:29108"/>
        <label>6</label>
    </ligand>
</feature>
<feature type="binding site" evidence="11 19">
    <location>
        <position position="234"/>
    </location>
    <ligand>
        <name>Ca(2+)</name>
        <dbReference type="ChEBI" id="CHEBI:29108"/>
        <label>4</label>
    </ligand>
</feature>
<feature type="binding site" evidence="11 19">
    <location>
        <position position="234"/>
    </location>
    <ligand>
        <name>Ca(2+)</name>
        <dbReference type="ChEBI" id="CHEBI:29108"/>
        <label>5</label>
    </ligand>
</feature>
<feature type="binding site" evidence="11 19">
    <location>
        <position position="235"/>
    </location>
    <ligand>
        <name>Ca(2+)</name>
        <dbReference type="ChEBI" id="CHEBI:29108"/>
        <label>6</label>
    </ligand>
</feature>
<feature type="binding site" evidence="11 13 16 19">
    <location>
        <position position="250"/>
    </location>
    <ligand>
        <name>Ca(2+)</name>
        <dbReference type="ChEBI" id="CHEBI:29108"/>
        <label>7</label>
    </ligand>
</feature>
<feature type="binding site" evidence="11 13 16 19">
    <location>
        <position position="250"/>
    </location>
    <ligand>
        <name>Ca(2+)</name>
        <dbReference type="ChEBI" id="CHEBI:29108"/>
        <label>8</label>
    </ligand>
</feature>
<feature type="binding site" evidence="11 19">
    <location>
        <position position="265"/>
    </location>
    <ligand>
        <name>Ca(2+)</name>
        <dbReference type="ChEBI" id="CHEBI:29108"/>
        <label>6</label>
    </ligand>
</feature>
<feature type="binding site" evidence="11 19">
    <location>
        <position position="267"/>
    </location>
    <ligand>
        <name>Ca(2+)</name>
        <dbReference type="ChEBI" id="CHEBI:29108"/>
        <label>5</label>
    </ligand>
</feature>
<feature type="binding site" evidence="11 19">
    <location>
        <position position="267"/>
    </location>
    <ligand>
        <name>Ca(2+)</name>
        <dbReference type="ChEBI" id="CHEBI:29108"/>
        <label>6</label>
    </ligand>
</feature>
<feature type="binding site" evidence="11 19">
    <location>
        <position position="271"/>
    </location>
    <ligand>
        <name>Ca(2+)</name>
        <dbReference type="ChEBI" id="CHEBI:29108"/>
        <label>6</label>
    </ligand>
</feature>
<feature type="binding site" evidence="11 13 16 19">
    <location>
        <position position="306"/>
    </location>
    <ligand>
        <name>Ca(2+)</name>
        <dbReference type="ChEBI" id="CHEBI:29108"/>
        <label>7</label>
    </ligand>
</feature>
<feature type="binding site" evidence="11 13 16 19">
    <location>
        <position position="308"/>
    </location>
    <ligand>
        <name>Ca(2+)</name>
        <dbReference type="ChEBI" id="CHEBI:29108"/>
        <label>7</label>
    </ligand>
</feature>
<feature type="binding site" evidence="11 13 16 19">
    <location>
        <position position="308"/>
    </location>
    <ligand>
        <name>Ca(2+)</name>
        <dbReference type="ChEBI" id="CHEBI:29108"/>
        <label>8</label>
    </ligand>
</feature>
<feature type="binding site" evidence="11 13 16 19">
    <location>
        <position position="339"/>
    </location>
    <ligand>
        <name>Ca(2+)</name>
        <dbReference type="ChEBI" id="CHEBI:29108"/>
        <label>8</label>
    </ligand>
</feature>
<feature type="binding site" evidence="11 13 16 19">
    <location>
        <position position="340"/>
    </location>
    <ligand>
        <name>Ca(2+)</name>
        <dbReference type="ChEBI" id="CHEBI:29108"/>
        <label>8</label>
    </ligand>
</feature>
<feature type="binding site" evidence="11 13 16 19">
    <location>
        <position position="341"/>
    </location>
    <ligand>
        <name>Ca(2+)</name>
        <dbReference type="ChEBI" id="CHEBI:29108"/>
        <label>9</label>
    </ligand>
</feature>
<feature type="binding site" evidence="11 13 16 19">
    <location>
        <position position="342"/>
    </location>
    <ligand>
        <name>Ca(2+)</name>
        <dbReference type="ChEBI" id="CHEBI:29108"/>
        <label>7</label>
    </ligand>
</feature>
<feature type="binding site" evidence="11 13 16 19">
    <location>
        <position position="342"/>
    </location>
    <ligand>
        <name>Ca(2+)</name>
        <dbReference type="ChEBI" id="CHEBI:29108"/>
        <label>8</label>
    </ligand>
</feature>
<feature type="binding site" evidence="11 19">
    <location>
        <position position="343"/>
    </location>
    <ligand>
        <name>Ca(2+)</name>
        <dbReference type="ChEBI" id="CHEBI:29108"/>
        <label>7</label>
    </ligand>
</feature>
<feature type="binding site" evidence="11 13 16 19">
    <location>
        <position position="343"/>
    </location>
    <ligand>
        <name>Ca(2+)</name>
        <dbReference type="ChEBI" id="CHEBI:29108"/>
        <label>9</label>
    </ligand>
</feature>
<feature type="binding site" evidence="13 20">
    <location>
        <position position="361"/>
    </location>
    <ligand>
        <name>Ca(2+)</name>
        <dbReference type="ChEBI" id="CHEBI:29108"/>
        <label>10</label>
    </ligand>
</feature>
<feature type="binding site" evidence="13 20">
    <location>
        <position position="361"/>
    </location>
    <ligand>
        <name>Ca(2+)</name>
        <dbReference type="ChEBI" id="CHEBI:29108"/>
        <label>11</label>
    </ligand>
</feature>
<feature type="binding site" evidence="11 13 16 19">
    <location>
        <position position="376"/>
    </location>
    <ligand>
        <name>Ca(2+)</name>
        <dbReference type="ChEBI" id="CHEBI:29108"/>
        <label>9</label>
    </ligand>
</feature>
<feature type="binding site" evidence="11 13 16 19">
    <location>
        <position position="378"/>
    </location>
    <ligand>
        <name>Ca(2+)</name>
        <dbReference type="ChEBI" id="CHEBI:29108"/>
        <label>8</label>
    </ligand>
</feature>
<feature type="binding site" evidence="11 13 16 19">
    <location>
        <position position="378"/>
    </location>
    <ligand>
        <name>Ca(2+)</name>
        <dbReference type="ChEBI" id="CHEBI:29108"/>
        <label>9</label>
    </ligand>
</feature>
<feature type="binding site" evidence="11 13 16 19">
    <location>
        <position position="382"/>
    </location>
    <ligand>
        <name>Ca(2+)</name>
        <dbReference type="ChEBI" id="CHEBI:29108"/>
        <label>9</label>
    </ligand>
</feature>
<feature type="binding site" evidence="13 20">
    <location>
        <position position="413"/>
    </location>
    <ligand>
        <name>Ca(2+)</name>
        <dbReference type="ChEBI" id="CHEBI:29108"/>
        <label>10</label>
    </ligand>
</feature>
<feature type="binding site" evidence="13 20">
    <location>
        <position position="415"/>
    </location>
    <ligand>
        <name>Ca(2+)</name>
        <dbReference type="ChEBI" id="CHEBI:29108"/>
        <label>10</label>
    </ligand>
</feature>
<feature type="binding site" evidence="13 20">
    <location>
        <position position="415"/>
    </location>
    <ligand>
        <name>Ca(2+)</name>
        <dbReference type="ChEBI" id="CHEBI:29108"/>
        <label>11</label>
    </ligand>
</feature>
<feature type="binding site" evidence="11 13 16 19">
    <location>
        <position position="428"/>
    </location>
    <ligand>
        <name>Ca(2+)</name>
        <dbReference type="ChEBI" id="CHEBI:29108"/>
        <label>9</label>
    </ligand>
</feature>
<feature type="binding site" evidence="13 20">
    <location>
        <position position="446"/>
    </location>
    <ligand>
        <name>Ca(2+)</name>
        <dbReference type="ChEBI" id="CHEBI:29108"/>
        <label>11</label>
    </ligand>
</feature>
<feature type="binding site" evidence="13 20">
    <location>
        <position position="447"/>
    </location>
    <ligand>
        <name>Ca(2+)</name>
        <dbReference type="ChEBI" id="CHEBI:29108"/>
        <label>11</label>
    </ligand>
</feature>
<feature type="binding site" evidence="13 20">
    <location>
        <position position="448"/>
    </location>
    <ligand>
        <name>Ca(2+)</name>
        <dbReference type="ChEBI" id="CHEBI:29108"/>
        <label>12</label>
    </ligand>
</feature>
<feature type="binding site" evidence="13 20">
    <location>
        <position position="449"/>
    </location>
    <ligand>
        <name>Ca(2+)</name>
        <dbReference type="ChEBI" id="CHEBI:29108"/>
        <label>10</label>
    </ligand>
</feature>
<feature type="binding site" evidence="13 20">
    <location>
        <position position="449"/>
    </location>
    <ligand>
        <name>Ca(2+)</name>
        <dbReference type="ChEBI" id="CHEBI:29108"/>
        <label>11</label>
    </ligand>
</feature>
<feature type="binding site" evidence="13 20">
    <location>
        <position position="450"/>
    </location>
    <ligand>
        <name>Ca(2+)</name>
        <dbReference type="ChEBI" id="CHEBI:29108"/>
        <label>12</label>
    </ligand>
</feature>
<feature type="binding site" evidence="13 20">
    <location>
        <position position="465"/>
    </location>
    <ligand>
        <name>Ca(2+)</name>
        <dbReference type="ChEBI" id="CHEBI:29108"/>
        <label>13</label>
    </ligand>
</feature>
<feature type="binding site" evidence="13 20">
    <location>
        <position position="465"/>
    </location>
    <ligand>
        <name>Ca(2+)</name>
        <dbReference type="ChEBI" id="CHEBI:29108"/>
        <label>14</label>
    </ligand>
</feature>
<feature type="binding site" evidence="13 20">
    <location>
        <position position="480"/>
    </location>
    <ligand>
        <name>Ca(2+)</name>
        <dbReference type="ChEBI" id="CHEBI:29108"/>
        <label>12</label>
    </ligand>
</feature>
<feature type="binding site" evidence="13 20">
    <location>
        <position position="482"/>
    </location>
    <ligand>
        <name>Ca(2+)</name>
        <dbReference type="ChEBI" id="CHEBI:29108"/>
        <label>11</label>
    </ligand>
</feature>
<feature type="binding site" evidence="13 20">
    <location>
        <position position="482"/>
    </location>
    <ligand>
        <name>Ca(2+)</name>
        <dbReference type="ChEBI" id="CHEBI:29108"/>
        <label>12</label>
    </ligand>
</feature>
<feature type="binding site" evidence="13 20">
    <location>
        <position position="486"/>
    </location>
    <ligand>
        <name>Ca(2+)</name>
        <dbReference type="ChEBI" id="CHEBI:29108"/>
        <label>12</label>
    </ligand>
</feature>
<feature type="binding site" evidence="13 20">
    <location>
        <position position="522"/>
    </location>
    <ligand>
        <name>Ca(2+)</name>
        <dbReference type="ChEBI" id="CHEBI:29108"/>
        <label>13</label>
    </ligand>
</feature>
<feature type="binding site" evidence="13 20">
    <location>
        <position position="524"/>
    </location>
    <ligand>
        <name>Ca(2+)</name>
        <dbReference type="ChEBI" id="CHEBI:29108"/>
        <label>13</label>
    </ligand>
</feature>
<feature type="binding site" evidence="13 20">
    <location>
        <position position="524"/>
    </location>
    <ligand>
        <name>Ca(2+)</name>
        <dbReference type="ChEBI" id="CHEBI:29108"/>
        <label>14</label>
    </ligand>
</feature>
<feature type="binding site" evidence="13 20">
    <location>
        <position position="537"/>
    </location>
    <ligand>
        <name>Ca(2+)</name>
        <dbReference type="ChEBI" id="CHEBI:29108"/>
        <label>12</label>
    </ligand>
</feature>
<feature type="binding site" evidence="13 20">
    <location>
        <position position="555"/>
    </location>
    <ligand>
        <name>Ca(2+)</name>
        <dbReference type="ChEBI" id="CHEBI:29108"/>
        <label>14</label>
    </ligand>
</feature>
<feature type="binding site" evidence="13 20">
    <location>
        <position position="556"/>
    </location>
    <ligand>
        <name>Ca(2+)</name>
        <dbReference type="ChEBI" id="CHEBI:29108"/>
        <label>14</label>
    </ligand>
</feature>
<feature type="binding site" evidence="13 20">
    <location>
        <position position="557"/>
    </location>
    <ligand>
        <name>Ca(2+)</name>
        <dbReference type="ChEBI" id="CHEBI:29108"/>
        <label>15</label>
    </ligand>
</feature>
<feature type="binding site" evidence="13 20">
    <location>
        <position position="558"/>
    </location>
    <ligand>
        <name>Ca(2+)</name>
        <dbReference type="ChEBI" id="CHEBI:29108"/>
        <label>13</label>
    </ligand>
</feature>
<feature type="binding site" evidence="13 20">
    <location>
        <position position="558"/>
    </location>
    <ligand>
        <name>Ca(2+)</name>
        <dbReference type="ChEBI" id="CHEBI:29108"/>
        <label>14</label>
    </ligand>
</feature>
<feature type="binding site" evidence="13 20">
    <location>
        <position position="559"/>
    </location>
    <ligand>
        <name>Ca(2+)</name>
        <dbReference type="ChEBI" id="CHEBI:29108"/>
        <label>13</label>
    </ligand>
</feature>
<feature type="binding site" evidence="13 20">
    <location>
        <position position="559"/>
    </location>
    <ligand>
        <name>Ca(2+)</name>
        <dbReference type="ChEBI" id="CHEBI:29108"/>
        <label>15</label>
    </ligand>
</feature>
<feature type="binding site" evidence="13 20">
    <location>
        <position position="594"/>
    </location>
    <ligand>
        <name>Ca(2+)</name>
        <dbReference type="ChEBI" id="CHEBI:29108"/>
        <label>15</label>
    </ligand>
</feature>
<feature type="binding site" evidence="13 20">
    <location>
        <position position="596"/>
    </location>
    <ligand>
        <name>Ca(2+)</name>
        <dbReference type="ChEBI" id="CHEBI:29108"/>
        <label>14</label>
    </ligand>
</feature>
<feature type="binding site" evidence="13 20">
    <location>
        <position position="596"/>
    </location>
    <ligand>
        <name>Ca(2+)</name>
        <dbReference type="ChEBI" id="CHEBI:29108"/>
        <label>15</label>
    </ligand>
</feature>
<feature type="binding site" evidence="13 20">
    <location>
        <position position="600"/>
    </location>
    <ligand>
        <name>Ca(2+)</name>
        <dbReference type="ChEBI" id="CHEBI:29108"/>
        <label>15</label>
    </ligand>
</feature>
<feature type="binding site" evidence="13 20">
    <location>
        <position position="646"/>
    </location>
    <ligand>
        <name>Ca(2+)</name>
        <dbReference type="ChEBI" id="CHEBI:29108"/>
        <label>15</label>
    </ligand>
</feature>
<feature type="glycosylation site" description="N-linked (GlcNAc...) asparagine" evidence="3">
    <location>
        <position position="44"/>
    </location>
</feature>
<feature type="glycosylation site" description="N-linked (GlcNAc...) asparagine" evidence="3">
    <location>
        <position position="262"/>
    </location>
</feature>
<feature type="glycosylation site" description="N-linked (GlcNAc...) asparagine" evidence="3">
    <location>
        <position position="284"/>
    </location>
</feature>
<feature type="glycosylation site" description="N-linked (GlcNAc...) asparagine" evidence="3">
    <location>
        <position position="377"/>
    </location>
</feature>
<feature type="glycosylation site" description="N-linked (GlcNAc...) asparagine" evidence="3">
    <location>
        <position position="421"/>
    </location>
</feature>
<feature type="glycosylation site" description="N-linked (GlcNAc...) asparagine" evidence="3">
    <location>
        <position position="486"/>
    </location>
</feature>
<feature type="glycosylation site" description="N-linked (GlcNAc...) asparagine" evidence="3">
    <location>
        <position position="546"/>
    </location>
</feature>
<feature type="glycosylation site" description="N-linked (GlcNAc...) asparagine" evidence="3">
    <location>
        <position position="570"/>
    </location>
</feature>
<feature type="glycosylation site" description="N-linked (GlcNAc...) asparagine" evidence="3">
    <location>
        <position position="676"/>
    </location>
</feature>
<feature type="disulfide bond" evidence="11 19">
    <location>
        <begin position="94"/>
        <end position="100"/>
    </location>
</feature>
<feature type="splice variant" id="VSP_061944" description="In isoform 2." evidence="5">
    <location>
        <begin position="755"/>
        <end position="825"/>
    </location>
</feature>
<feature type="mutagenesis site" description="Does not affect interaction with cdh2 or adhesion activity." evidence="8">
    <original>L</original>
    <variation>P</variation>
    <location>
        <position position="28"/>
    </location>
</feature>
<feature type="mutagenesis site" description="Does not affect interaction with cdh2 or adhesion activity." evidence="8">
    <original>L</original>
    <variation>R</variation>
    <location>
        <position position="82"/>
    </location>
</feature>
<feature type="mutagenesis site" description="Does not affect interaction with cdh2 or adhesion activity." evidence="8">
    <original>D</original>
    <variation>N</variation>
    <location>
        <position position="122"/>
    </location>
</feature>
<feature type="mutagenesis site" description="Dramatically reduced adhesion." evidence="8">
    <original>N</original>
    <variation>NSEN</variation>
    <location>
        <position position="142"/>
    </location>
</feature>
<feature type="mutagenesis site" description="Abolishes homophilic interactions." evidence="11">
    <original>T</original>
    <variation>R</variation>
    <location>
        <position position="147"/>
    </location>
</feature>
<feature type="mutagenesis site" description="Does not affect melting temperature. Abolishes homophilic interactions." evidence="11">
    <original>E</original>
    <variation>K</variation>
    <location>
        <position position="314"/>
    </location>
</feature>
<feature type="mutagenesis site" description="Does not affect folding but reduces melting temperature." evidence="11">
    <original>N</original>
    <variation>S</variation>
    <location>
        <position position="341"/>
    </location>
</feature>
<feature type="mutagenesis site" description="Does not abolish homophilic interactions." evidence="11">
    <original>R</original>
    <variation>E</variation>
    <location>
        <position position="388"/>
    </location>
</feature>
<feature type="sequence conflict" description="In Ref. 1; ACQ72596." evidence="15" ref="1">
    <original>S</original>
    <variation>P</variation>
    <location>
        <position position="1030"/>
    </location>
</feature>
<feature type="strand" evidence="21">
    <location>
        <begin position="240"/>
        <end position="249"/>
    </location>
</feature>
<feature type="strand" evidence="21">
    <location>
        <begin position="257"/>
        <end position="260"/>
    </location>
</feature>
<feature type="strand" evidence="21">
    <location>
        <begin position="274"/>
        <end position="284"/>
    </location>
</feature>
<feature type="helix" evidence="21">
    <location>
        <begin position="286"/>
        <end position="289"/>
    </location>
</feature>
<feature type="strand" evidence="21">
    <location>
        <begin position="290"/>
        <end position="292"/>
    </location>
</feature>
<feature type="turn" evidence="21">
    <location>
        <begin position="294"/>
        <end position="296"/>
    </location>
</feature>
<feature type="strand" evidence="21">
    <location>
        <begin position="298"/>
        <end position="301"/>
    </location>
</feature>
<feature type="turn" evidence="21">
    <location>
        <begin position="307"/>
        <end position="309"/>
    </location>
</feature>
<feature type="strand" evidence="21">
    <location>
        <begin position="311"/>
        <end position="322"/>
    </location>
</feature>
<feature type="strand" evidence="22">
    <location>
        <begin position="323"/>
        <end position="325"/>
    </location>
</feature>
<feature type="strand" evidence="21">
    <location>
        <begin position="329"/>
        <end position="338"/>
    </location>
</feature>
<feature type="strand" evidence="21">
    <location>
        <begin position="346"/>
        <end position="355"/>
    </location>
</feature>
<feature type="strand" evidence="21">
    <location>
        <begin position="358"/>
        <end position="360"/>
    </location>
</feature>
<feature type="strand" evidence="21">
    <location>
        <begin position="370"/>
        <end position="375"/>
    </location>
</feature>
<feature type="helix" evidence="21">
    <location>
        <begin position="380"/>
        <end position="382"/>
    </location>
</feature>
<feature type="strand" evidence="21">
    <location>
        <begin position="385"/>
        <end position="391"/>
    </location>
</feature>
<feature type="strand" evidence="21">
    <location>
        <begin position="394"/>
        <end position="400"/>
    </location>
</feature>
<feature type="strand" evidence="21">
    <location>
        <begin position="403"/>
        <end position="408"/>
    </location>
</feature>
<feature type="turn" evidence="21">
    <location>
        <begin position="414"/>
        <end position="416"/>
    </location>
</feature>
<feature type="strand" evidence="21">
    <location>
        <begin position="419"/>
        <end position="432"/>
    </location>
</feature>
<feature type="strand" evidence="21">
    <location>
        <begin position="435"/>
        <end position="445"/>
    </location>
</feature>
<feature type="strand" evidence="22">
    <location>
        <begin position="453"/>
        <end position="455"/>
    </location>
</feature>
<feature type="strand" evidence="22">
    <location>
        <begin position="457"/>
        <end position="464"/>
    </location>
</feature>
<feature type="strand" evidence="22">
    <location>
        <begin position="471"/>
        <end position="475"/>
    </location>
</feature>
<feature type="helix" evidence="22">
    <location>
        <begin position="484"/>
        <end position="487"/>
    </location>
</feature>
<feature type="strand" evidence="22">
    <location>
        <begin position="490"/>
        <end position="493"/>
    </location>
</feature>
<feature type="turn" evidence="22">
    <location>
        <begin position="499"/>
        <end position="501"/>
    </location>
</feature>
<feature type="turn" evidence="22">
    <location>
        <begin position="504"/>
        <end position="506"/>
    </location>
</feature>
<feature type="strand" evidence="22">
    <location>
        <begin position="507"/>
        <end position="509"/>
    </location>
</feature>
<feature type="strand" evidence="22">
    <location>
        <begin position="513"/>
        <end position="517"/>
    </location>
</feature>
<feature type="turn" evidence="22">
    <location>
        <begin position="523"/>
        <end position="525"/>
    </location>
</feature>
<feature type="strand" evidence="22">
    <location>
        <begin position="527"/>
        <end position="536"/>
    </location>
</feature>
<feature type="strand" evidence="22">
    <location>
        <begin position="539"/>
        <end position="541"/>
    </location>
</feature>
<feature type="strand" evidence="22">
    <location>
        <begin position="544"/>
        <end position="554"/>
    </location>
</feature>
<feature type="strand" evidence="22">
    <location>
        <begin position="562"/>
        <end position="566"/>
    </location>
</feature>
<feature type="strand" evidence="22">
    <location>
        <begin position="572"/>
        <end position="578"/>
    </location>
</feature>
<feature type="strand" evidence="22">
    <location>
        <begin position="586"/>
        <end position="589"/>
    </location>
</feature>
<feature type="strand" evidence="22">
    <location>
        <begin position="591"/>
        <end position="593"/>
    </location>
</feature>
<feature type="helix" evidence="22">
    <location>
        <begin position="598"/>
        <end position="601"/>
    </location>
</feature>
<feature type="strand" evidence="22">
    <location>
        <begin position="604"/>
        <end position="611"/>
    </location>
</feature>
<feature type="turn" evidence="22">
    <location>
        <begin position="612"/>
        <end position="614"/>
    </location>
</feature>
<feature type="strand" evidence="22">
    <location>
        <begin position="615"/>
        <end position="617"/>
    </location>
</feature>
<feature type="turn" evidence="22">
    <location>
        <begin position="619"/>
        <end position="621"/>
    </location>
</feature>
<feature type="strand" evidence="22">
    <location>
        <begin position="623"/>
        <end position="626"/>
    </location>
</feature>
<feature type="strand" evidence="22">
    <location>
        <begin position="636"/>
        <end position="645"/>
    </location>
</feature>
<feature type="strand" evidence="22">
    <location>
        <begin position="648"/>
        <end position="650"/>
    </location>
</feature>
<feature type="strand" evidence="22">
    <location>
        <begin position="653"/>
        <end position="663"/>
    </location>
</feature>
<comment type="function">
    <text evidence="5 7 8 10 12">Calcium-dependent cell-adhesion protein (PubMed:21115806). Essential for the early stages of neurulation in the anterior neural plate (PubMed:19615992). Shows little cell adhesion activity on its own but exhibits robust homophilic cell adhesion when in a complex with cadherin cdh2 and appears to mediate the adhesion while cdh2 acts as a cell adhesion cofactor in the complex (PubMed:21115806, PubMed:22184198, PubMed:33004519). Functions with cdh2 to coordinate cell adhesion and cell movements during neurulation (PubMed:21115806). Contributes to neural progenitor cell patterning with cdh2 by promoting homophilic cell interactions (PubMed:33004519). Regulates the columnar organization of neurons in the optic tectum (PubMed:26598617).</text>
</comment>
<comment type="subunit">
    <text evidence="7 8 11">Homodimer; antiparallel (PubMed:27787195). Interacts with cadherin cdh2; the interaction confers robust cell adhesion activity on pcdh19 (PubMed:21115806, PubMed:22184198).</text>
</comment>
<comment type="subcellular location">
    <subcellularLocation>
        <location evidence="7">Cell membrane</location>
        <topology evidence="1">Single-pass type I membrane protein</topology>
    </subcellularLocation>
</comment>
<comment type="alternative products">
    <event type="alternative splicing"/>
    <isoform>
        <id>F8W3X3-1</id>
        <name>1</name>
        <sequence type="displayed"/>
    </isoform>
    <isoform>
        <id>F8W3X3-2</id>
        <name>2</name>
        <sequence type="described" ref="VSP_061944"/>
    </isoform>
</comment>
<comment type="tissue specificity">
    <text evidence="5 6 9 10">In the embryo, strongly expressed in the developing nervous system (PubMed:19615992). At 12 hours post fertilization (hpf), shows a segmental expression pattern in the anterior third of the neural keel with strong expression in the presumptive forebrain, cerebellum/rhombomere 1 and rhombomere 4 (PubMed:19757381). By 24 hpf, expressed widely in the brain and spinal cord with higher expression levels in the ventral telencephalon, dorsal and central thalamus, optic tectum, central tegmentum, cerebellum and dorsolateral regions of the hindbrain (PubMed:19757381). As development proceeds, expression becomes restricted to the dorsal and/or lateral regions of the central nervous system (PubMed:19757381). Not detected in the spinal cord of two- and three-day old embryos (PubMed:19757381). Expressed in the eye primordium, developing retina, lens and otic vesicle (PubMed:19757381). Expressed in the larval optic tectum at 4 days post-fertilization where it localizes in discrete columns of neurons (PubMed:26598617). Expressed throughout the adult brain with strong expression in the ventromedial telencephalon, periventricular regions of the thalamus and anterior hypothalamus, stratum periventriculare of the optic tectum, dorsal tegmental nucleus, granular regions of the cerebellar body and valvula, and superficial layers of the facial and vagal lobes (PubMed:25612302).</text>
</comment>
<comment type="developmental stage">
    <text evidence="6 10 14">Undetectable in unfertilized eggs and in embryos at 2 and 4 hours post-fertilization (hpf) (PubMed:35460869). Also not detected in embryos at 6 hpf (PubMed:19757381). Expression is detected in the embryo at 12 hpf (PubMed:19757381). Expression is also detected in the larva and adult (PubMed:19757381, PubMed:26598617).</text>
</comment>
<comment type="disruption phenotype">
    <text evidence="5 7 10 14">Disruption of the columnar arrangement of neurons in the optic tectum and defective visually guided behaviors (PubMed:26598617). Increased spontaneous firing activity in the larval optic tectum (PubMed:35460869). Morpholino knockdown results in aberrant early brain morphogenesis due to disrupted cell convergence in the anterior neural plate with mutants showing an abnormally wide neural plate (PubMed:19615992, PubMed:21115806). Mutants show impaired directedness of cell movements and impaired coherence of movements among neighboring cells (PubMed:21115806).</text>
</comment>
<comment type="sequence caution" evidence="15">
    <conflict type="erroneous initiation">
        <sequence resource="EMBL-CDS" id="ACQ72596"/>
    </conflict>
    <text>Truncated N-terminus.</text>
</comment>
<reference key="1">
    <citation type="journal article" date="2009" name="Dev. Biol.">
        <title>Protocadherin-19 is essential for early steps in brain morphogenesis.</title>
        <authorList>
            <person name="Emond M.R."/>
            <person name="Biswas S."/>
            <person name="Jontes J.D."/>
        </authorList>
    </citation>
    <scope>NUCLEOTIDE SEQUENCE [MRNA] (ISOFORMS 1 AND 2)</scope>
    <scope>FUNCTION</scope>
    <scope>TISSUE SPECIFICITY</scope>
    <scope>DISRUPTION PHENOTYPE</scope>
</reference>
<reference key="2">
    <citation type="journal article" date="2013" name="Nature">
        <title>The zebrafish reference genome sequence and its relationship to the human genome.</title>
        <authorList>
            <person name="Howe K."/>
            <person name="Clark M.D."/>
            <person name="Torroja C.F."/>
            <person name="Torrance J."/>
            <person name="Berthelot C."/>
            <person name="Muffato M."/>
            <person name="Collins J.E."/>
            <person name="Humphray S."/>
            <person name="McLaren K."/>
            <person name="Matthews L."/>
            <person name="McLaren S."/>
            <person name="Sealy I."/>
            <person name="Caccamo M."/>
            <person name="Churcher C."/>
            <person name="Scott C."/>
            <person name="Barrett J.C."/>
            <person name="Koch R."/>
            <person name="Rauch G.J."/>
            <person name="White S."/>
            <person name="Chow W."/>
            <person name="Kilian B."/>
            <person name="Quintais L.T."/>
            <person name="Guerra-Assuncao J.A."/>
            <person name="Zhou Y."/>
            <person name="Gu Y."/>
            <person name="Yen J."/>
            <person name="Vogel J.H."/>
            <person name="Eyre T."/>
            <person name="Redmond S."/>
            <person name="Banerjee R."/>
            <person name="Chi J."/>
            <person name="Fu B."/>
            <person name="Langley E."/>
            <person name="Maguire S.F."/>
            <person name="Laird G.K."/>
            <person name="Lloyd D."/>
            <person name="Kenyon E."/>
            <person name="Donaldson S."/>
            <person name="Sehra H."/>
            <person name="Almeida-King J."/>
            <person name="Loveland J."/>
            <person name="Trevanion S."/>
            <person name="Jones M."/>
            <person name="Quail M."/>
            <person name="Willey D."/>
            <person name="Hunt A."/>
            <person name="Burton J."/>
            <person name="Sims S."/>
            <person name="McLay K."/>
            <person name="Plumb B."/>
            <person name="Davis J."/>
            <person name="Clee C."/>
            <person name="Oliver K."/>
            <person name="Clark R."/>
            <person name="Riddle C."/>
            <person name="Elliot D."/>
            <person name="Threadgold G."/>
            <person name="Harden G."/>
            <person name="Ware D."/>
            <person name="Begum S."/>
            <person name="Mortimore B."/>
            <person name="Kerry G."/>
            <person name="Heath P."/>
            <person name="Phillimore B."/>
            <person name="Tracey A."/>
            <person name="Corby N."/>
            <person name="Dunn M."/>
            <person name="Johnson C."/>
            <person name="Wood J."/>
            <person name="Clark S."/>
            <person name="Pelan S."/>
            <person name="Griffiths G."/>
            <person name="Smith M."/>
            <person name="Glithero R."/>
            <person name="Howden P."/>
            <person name="Barker N."/>
            <person name="Lloyd C."/>
            <person name="Stevens C."/>
            <person name="Harley J."/>
            <person name="Holt K."/>
            <person name="Panagiotidis G."/>
            <person name="Lovell J."/>
            <person name="Beasley H."/>
            <person name="Henderson C."/>
            <person name="Gordon D."/>
            <person name="Auger K."/>
            <person name="Wright D."/>
            <person name="Collins J."/>
            <person name="Raisen C."/>
            <person name="Dyer L."/>
            <person name="Leung K."/>
            <person name="Robertson L."/>
            <person name="Ambridge K."/>
            <person name="Leongamornlert D."/>
            <person name="McGuire S."/>
            <person name="Gilderthorp R."/>
            <person name="Griffiths C."/>
            <person name="Manthravadi D."/>
            <person name="Nichol S."/>
            <person name="Barker G."/>
            <person name="Whitehead S."/>
            <person name="Kay M."/>
            <person name="Brown J."/>
            <person name="Murnane C."/>
            <person name="Gray E."/>
            <person name="Humphries M."/>
            <person name="Sycamore N."/>
            <person name="Barker D."/>
            <person name="Saunders D."/>
            <person name="Wallis J."/>
            <person name="Babbage A."/>
            <person name="Hammond S."/>
            <person name="Mashreghi-Mohammadi M."/>
            <person name="Barr L."/>
            <person name="Martin S."/>
            <person name="Wray P."/>
            <person name="Ellington A."/>
            <person name="Matthews N."/>
            <person name="Ellwood M."/>
            <person name="Woodmansey R."/>
            <person name="Clark G."/>
            <person name="Cooper J."/>
            <person name="Tromans A."/>
            <person name="Grafham D."/>
            <person name="Skuce C."/>
            <person name="Pandian R."/>
            <person name="Andrews R."/>
            <person name="Harrison E."/>
            <person name="Kimberley A."/>
            <person name="Garnett J."/>
            <person name="Fosker N."/>
            <person name="Hall R."/>
            <person name="Garner P."/>
            <person name="Kelly D."/>
            <person name="Bird C."/>
            <person name="Palmer S."/>
            <person name="Gehring I."/>
            <person name="Berger A."/>
            <person name="Dooley C.M."/>
            <person name="Ersan-Urun Z."/>
            <person name="Eser C."/>
            <person name="Geiger H."/>
            <person name="Geisler M."/>
            <person name="Karotki L."/>
            <person name="Kirn A."/>
            <person name="Konantz J."/>
            <person name="Konantz M."/>
            <person name="Oberlander M."/>
            <person name="Rudolph-Geiger S."/>
            <person name="Teucke M."/>
            <person name="Lanz C."/>
            <person name="Raddatz G."/>
            <person name="Osoegawa K."/>
            <person name="Zhu B."/>
            <person name="Rapp A."/>
            <person name="Widaa S."/>
            <person name="Langford C."/>
            <person name="Yang F."/>
            <person name="Schuster S.C."/>
            <person name="Carter N.P."/>
            <person name="Harrow J."/>
            <person name="Ning Z."/>
            <person name="Herrero J."/>
            <person name="Searle S.M."/>
            <person name="Enright A."/>
            <person name="Geisler R."/>
            <person name="Plasterk R.H."/>
            <person name="Lee C."/>
            <person name="Westerfield M."/>
            <person name="de Jong P.J."/>
            <person name="Zon L.I."/>
            <person name="Postlethwait J.H."/>
            <person name="Nusslein-Volhard C."/>
            <person name="Hubbard T.J."/>
            <person name="Roest Crollius H."/>
            <person name="Rogers J."/>
            <person name="Stemple D.L."/>
        </authorList>
    </citation>
    <scope>NUCLEOTIDE SEQUENCE [LARGE SCALE GENOMIC DNA]</scope>
    <source>
        <strain>Tuebingen</strain>
    </source>
</reference>
<reference evidence="15" key="3">
    <citation type="journal article" date="2010" name="Int. J. Dev. Biol.">
        <title>Expression of protocadherin-19 in the nervous system of the embryonic zebrafish.</title>
        <authorList>
            <person name="Liu Q."/>
            <person name="Chen Y."/>
            <person name="Kubota F."/>
            <person name="Pan J.J."/>
            <person name="Murakami T."/>
        </authorList>
    </citation>
    <scope>TISSUE SPECIFICITY</scope>
    <scope>DEVELOPMENTAL STAGE</scope>
</reference>
<reference evidence="15" key="4">
    <citation type="journal article" date="2010" name="J. Cell Biol.">
        <title>Protocadherin-19 and N-cadherin interact to control cell movements during anterior neurulation.</title>
        <authorList>
            <person name="Biswas S."/>
            <person name="Emond M.R."/>
            <person name="Jontes J.D."/>
        </authorList>
    </citation>
    <scope>FUNCTION</scope>
    <scope>INTERACTION WITH CDH2</scope>
    <scope>SUBCELLULAR LOCATION</scope>
    <scope>DISRUPTION PHENOTYPE</scope>
</reference>
<reference evidence="15" key="5">
    <citation type="journal article" date="2011" name="J. Cell Biol.">
        <title>A complex of Protocadherin-19 and N-cadherin mediates a novel mechanism of cell adhesion.</title>
        <authorList>
            <person name="Emond M.R."/>
            <person name="Biswas S."/>
            <person name="Blevins C.J."/>
            <person name="Jontes J.D."/>
        </authorList>
    </citation>
    <scope>FUNCTION</scope>
    <scope>INTERACTION WITH CDH2</scope>
    <scope>MUTAGENESIS OF LEU-28; LEU-82; ASP-122 AND ASN-142</scope>
</reference>
<reference evidence="15" key="6">
    <citation type="journal article" date="2015" name="J. Cell Biol.">
        <title>Protocadherins control the modular assembly of neuronal columns in the zebrafish optic tectum.</title>
        <authorList>
            <person name="Cooper S.R."/>
            <person name="Emond M.R."/>
            <person name="Duy P.Q."/>
            <person name="Liebau B.G."/>
            <person name="Wolman M.A."/>
            <person name="Jontes J.D."/>
        </authorList>
    </citation>
    <scope>FUNCTION</scope>
    <scope>TISSUE SPECIFICITY</scope>
    <scope>DEVELOPMENTAL STAGE</scope>
    <scope>DISRUPTION PHENOTYPE</scope>
</reference>
<reference evidence="15" key="7">
    <citation type="journal article" date="2015" name="J. Comp. Neurol.">
        <title>Differential expression of protocadherin-19, protocadherin-17, and cadherin-6 in adult zebrafish brain.</title>
        <authorList>
            <person name="Liu Q."/>
            <person name="Bhattarai S."/>
            <person name="Wang N."/>
            <person name="Sochacka-Marlowe A."/>
        </authorList>
    </citation>
    <scope>TISSUE SPECIFICITY</scope>
</reference>
<reference evidence="15" key="8">
    <citation type="journal article" date="2020" name="Science">
        <title>An adhesion code ensures robust pattern formation during tissue morphogenesis.</title>
        <authorList>
            <person name="Tsai T.Y."/>
            <person name="Sikora M."/>
            <person name="Xia P."/>
            <person name="Colak-Champollion T."/>
            <person name="Knaut H."/>
            <person name="Heisenberg C.P."/>
            <person name="Megason S.G."/>
        </authorList>
    </citation>
    <scope>FUNCTION</scope>
</reference>
<reference evidence="15" key="9">
    <citation type="journal article" date="2022" name="Neurobiol. Dis.">
        <title>Mosaic and non-mosaic protocadherin 19 mutation leads to neuronal hyperexcitability in zebrafish.</title>
        <authorList>
            <person name="Robens B.K."/>
            <person name="Yang X."/>
            <person name="McGraw C.M."/>
            <person name="Turner L.H."/>
            <person name="Robens C."/>
            <person name="Thyme S."/>
            <person name="Rotenberg A."/>
            <person name="Poduri A."/>
        </authorList>
    </citation>
    <scope>DEVELOPMENTAL STAGE</scope>
    <scope>DISRUPTION PHENOTYPE</scope>
</reference>
<reference evidence="18 19" key="10">
    <citation type="journal article" date="2016" name="Elife">
        <title>Structural determinants of adhesion by Protocadherin-19 and implications for its role in epilepsy.</title>
        <authorList>
            <person name="Cooper S.R."/>
            <person name="Jontes J.D."/>
            <person name="Sotomayor M."/>
        </authorList>
    </citation>
    <scope>X-RAY CRYSTALLOGRAPHY (2.51 ANGSTROMS) OF 25-446 IN COMPLEX WITH CA(2+)</scope>
    <scope>SUBUNIT</scope>
    <scope>DISULFIDE BOND</scope>
    <scope>MUTAGENESIS OF THR-147; GLU-314; ASN-341 AND ARG-388</scope>
</reference>
<reference evidence="20" key="11">
    <citation type="journal article" date="2021" name="Structure">
        <title>A complete Protocadherin-19 ectodomain model for evaluating epilepsy-causing mutations and potential protein interaction sites.</title>
        <authorList>
            <person name="Hudson J.D."/>
            <person name="Tamilselvan E."/>
            <person name="Sotomayor M."/>
            <person name="Cooper S.R."/>
        </authorList>
    </citation>
    <scope>X-RAY CRYSTALLOGRAPHY (3.00 ANGSTROMS) OF 237-670 IN COMPLEX WITH CA(2+)</scope>
</reference>
<sequence length="1088" mass="120174">MHSKDMDFVQMFVCFLLCWTGVDAVFNLKYTVEEELRAGTKIANVTADAKVAGFALGNRQPYLRVISNSEPRWVNLSPAGLLITKQKIDRDAVCRQTPKCFISLEVMSNSMEICVIKIEIIDVNDNAPRFPTNHIDIEISENAAPGTRFPLEGASDPDSGSNGIQTYTITPNDIFGLEIKTRGDGSKIAELVVEKTLDRETQSRYTFELTAEDGGDPPKSGTVQLNIKVIDSNDNNPVFDEPVYTVNVLENSPINTLVIDLNATDPDEGTNGEVVYSFINFVSNLTKQMFKIDPKTGVITVNGVLDHEELHIHEIDVQAKDLGPNSIPAHCKVIVNVIDINDNAPEIKLLSENSEMVEVSENAPLGYVIALVRVSDNDSGANGKVQCRLQGNVPFRLNEFESFSTLLVDGRLDREQRDMYNLTILAEDSGYPPLRSSKSFAVKVTDENDNPPYFTKPHYQAMVLENNVPGAFLLAVSARDPDLGMNGTVSYEIIKSEVRGMSVESYVTVNSNGEIYGVRAFNHEDTRTFEFKVSAKDGGDPPLTSNATVRIVVLDVNDNTPVMTTPPLVNGTAEVSIPKNAGVGYLVTQIKADDYDEGENGRLTYSISEGDMAYFEIDQINGEVRTTKTFGENAKPSYQITVVAHDHGQTSLSASAYIVIYLSPDLNAQEQIGPVNLSLIFIIALGSIAVILFVTMIFVAVKCKRDNKEIRTYNCRVAEYSYGNQKKSSKKKKLSKNDIRLVPRDVEETDKMNVVSCSSLTSSLNYFDYHQQTLPLGCRRSESTFLNVENQNSRNAAPNHGYHHTFTGQGPQQPDLIINGMPLPETENYSIDSSYVNSRAHLIKSTSTFKDMEGNSLKDSGHEESDQTDSEHDVQRGHYADTAVNDVLNMTVPSNNSQIPDQDQSEGFHCQDECRILGHSDRCWMPRVPIPARAKSPEHGRNVIALSIEATTVDVPHYEDCGTTKRTFATFGKDGPDEDRAEQRGRRQTAEPAVCSPKTNGAVREAGNGREAVSPITSPVHLKSPQSKASSTYNTLKCRDAERIANHSLLRQPEGKDSEPAMREINTLLQDGRDKESPGSKRLKDIVL</sequence>
<protein>
    <recommendedName>
        <fullName evidence="17">Protocadherin-19</fullName>
    </recommendedName>
</protein>
<keyword id="KW-0002">3D-structure</keyword>
<keyword id="KW-0025">Alternative splicing</keyword>
<keyword id="KW-0106">Calcium</keyword>
<keyword id="KW-0130">Cell adhesion</keyword>
<keyword id="KW-1003">Cell membrane</keyword>
<keyword id="KW-1015">Disulfide bond</keyword>
<keyword id="KW-0325">Glycoprotein</keyword>
<keyword id="KW-0472">Membrane</keyword>
<keyword id="KW-0479">Metal-binding</keyword>
<keyword id="KW-0524">Neurogenesis</keyword>
<keyword id="KW-1185">Reference proteome</keyword>
<keyword id="KW-0677">Repeat</keyword>
<keyword id="KW-0732">Signal</keyword>
<keyword id="KW-0812">Transmembrane</keyword>
<keyword id="KW-1133">Transmembrane helix</keyword>
<name>PCD19_DANRE</name>
<dbReference type="EMBL" id="FJ855218">
    <property type="protein sequence ID" value="ACQ72596.1"/>
    <property type="status" value="ALT_INIT"/>
    <property type="molecule type" value="mRNA"/>
</dbReference>
<dbReference type="EMBL" id="CR318607">
    <property type="status" value="NOT_ANNOTATED_CDS"/>
    <property type="molecule type" value="Genomic_DNA"/>
</dbReference>
<dbReference type="EMBL" id="FP102785">
    <property type="status" value="NOT_ANNOTATED_CDS"/>
    <property type="molecule type" value="Genomic_DNA"/>
</dbReference>
<dbReference type="RefSeq" id="XP_005169652.1">
    <molecule id="F8W3X3-2"/>
    <property type="nucleotide sequence ID" value="XM_005169595.5"/>
</dbReference>
<dbReference type="PDB" id="5CO1">
    <property type="method" value="X-ray"/>
    <property type="resolution" value="2.51 A"/>
    <property type="chains" value="A/B/C/D=237-446"/>
</dbReference>
<dbReference type="PDB" id="5IU9">
    <property type="method" value="X-ray"/>
    <property type="resolution" value="3.59 A"/>
    <property type="chains" value="A/B=25-446"/>
</dbReference>
<dbReference type="PDB" id="6PGW">
    <property type="method" value="X-ray"/>
    <property type="resolution" value="3.00 A"/>
    <property type="chains" value="A=237-670"/>
</dbReference>
<dbReference type="PDBsum" id="5CO1"/>
<dbReference type="PDBsum" id="5IU9"/>
<dbReference type="PDBsum" id="6PGW"/>
<dbReference type="SMR" id="F8W3X3"/>
<dbReference type="STRING" id="7955.ENSDARP00000124001"/>
<dbReference type="PaxDb" id="7955-ENSDARP00000124001"/>
<dbReference type="Ensembl" id="ENSDART00000149443">
    <molecule id="F8W3X3-1"/>
    <property type="protein sequence ID" value="ENSDARP00000124001"/>
    <property type="gene ID" value="ENSDARG00000034344"/>
</dbReference>
<dbReference type="GeneID" id="555688"/>
<dbReference type="AGR" id="ZFIN:ZDB-GENE-030131-4218"/>
<dbReference type="CTD" id="57526"/>
<dbReference type="ZFIN" id="ZDB-GENE-030131-4218">
    <property type="gene designation" value="pcdh19"/>
</dbReference>
<dbReference type="eggNOG" id="KOG3594">
    <property type="taxonomic scope" value="Eukaryota"/>
</dbReference>
<dbReference type="HOGENOM" id="CLU_006480_1_1_1"/>
<dbReference type="OrthoDB" id="6252479at2759"/>
<dbReference type="PhylomeDB" id="F8W3X3"/>
<dbReference type="PRO" id="PR:F8W3X3"/>
<dbReference type="Proteomes" id="UP000000437">
    <property type="component" value="Chromosome 14"/>
</dbReference>
<dbReference type="Bgee" id="ENSDARG00000034344">
    <property type="expression patterns" value="Expressed in nucleus of brain and 144 other cell types or tissues"/>
</dbReference>
<dbReference type="ExpressionAtlas" id="F8W3X3">
    <property type="expression patterns" value="baseline and differential"/>
</dbReference>
<dbReference type="GO" id="GO:0016020">
    <property type="term" value="C:membrane"/>
    <property type="evidence" value="ECO:0000314"/>
    <property type="project" value="ZFIN"/>
</dbReference>
<dbReference type="GO" id="GO:0005886">
    <property type="term" value="C:plasma membrane"/>
    <property type="evidence" value="ECO:0000314"/>
    <property type="project" value="UniProtKB"/>
</dbReference>
<dbReference type="GO" id="GO:0098794">
    <property type="term" value="C:postsynapse"/>
    <property type="evidence" value="ECO:0007669"/>
    <property type="project" value="GOC"/>
</dbReference>
<dbReference type="GO" id="GO:0045296">
    <property type="term" value="F:cadherin binding"/>
    <property type="evidence" value="ECO:0000353"/>
    <property type="project" value="UniProtKB"/>
</dbReference>
<dbReference type="GO" id="GO:0005509">
    <property type="term" value="F:calcium ion binding"/>
    <property type="evidence" value="ECO:0000314"/>
    <property type="project" value="ZFIN"/>
</dbReference>
<dbReference type="GO" id="GO:0042802">
    <property type="term" value="F:identical protein binding"/>
    <property type="evidence" value="ECO:0000353"/>
    <property type="project" value="ZFIN"/>
</dbReference>
<dbReference type="GO" id="GO:0048854">
    <property type="term" value="P:brain morphogenesis"/>
    <property type="evidence" value="ECO:0000315"/>
    <property type="project" value="ZFIN"/>
</dbReference>
<dbReference type="GO" id="GO:0007155">
    <property type="term" value="P:cell adhesion"/>
    <property type="evidence" value="ECO:0000318"/>
    <property type="project" value="GO_Central"/>
</dbReference>
<dbReference type="GO" id="GO:0098609">
    <property type="term" value="P:cell-cell adhesion"/>
    <property type="evidence" value="ECO:0000315"/>
    <property type="project" value="UniProtKB"/>
</dbReference>
<dbReference type="GO" id="GO:0060079">
    <property type="term" value="P:excitatory postsynaptic potential"/>
    <property type="evidence" value="ECO:0000315"/>
    <property type="project" value="ZFIN"/>
</dbReference>
<dbReference type="GO" id="GO:0007156">
    <property type="term" value="P:homophilic cell adhesion via plasma membrane adhesion molecules"/>
    <property type="evidence" value="ECO:0007669"/>
    <property type="project" value="InterPro"/>
</dbReference>
<dbReference type="GO" id="GO:0001841">
    <property type="term" value="P:neural tube formation"/>
    <property type="evidence" value="ECO:0000315"/>
    <property type="project" value="UniProtKB"/>
</dbReference>
<dbReference type="GO" id="GO:0098908">
    <property type="term" value="P:regulation of neuronal action potential"/>
    <property type="evidence" value="ECO:0000315"/>
    <property type="project" value="ZFIN"/>
</dbReference>
<dbReference type="GO" id="GO:0007601">
    <property type="term" value="P:visual perception"/>
    <property type="evidence" value="ECO:0000315"/>
    <property type="project" value="ZFIN"/>
</dbReference>
<dbReference type="CDD" id="cd11304">
    <property type="entry name" value="Cadherin_repeat"/>
    <property type="match status" value="6"/>
</dbReference>
<dbReference type="FunFam" id="2.60.40.60:FF:000360">
    <property type="entry name" value="Protocadherin 19"/>
    <property type="match status" value="1"/>
</dbReference>
<dbReference type="FunFam" id="2.60.40.60:FF:000001">
    <property type="entry name" value="Protocadherin alpha 2"/>
    <property type="match status" value="1"/>
</dbReference>
<dbReference type="FunFam" id="2.60.40.60:FF:000002">
    <property type="entry name" value="Protocadherin alpha 2"/>
    <property type="match status" value="1"/>
</dbReference>
<dbReference type="FunFam" id="2.60.40.60:FF:000007">
    <property type="entry name" value="Protocadherin alpha 2"/>
    <property type="match status" value="1"/>
</dbReference>
<dbReference type="FunFam" id="2.60.40.60:FF:000088">
    <property type="entry name" value="protocadherin-19 isoform X2"/>
    <property type="match status" value="1"/>
</dbReference>
<dbReference type="FunFam" id="2.60.40.60:FF:000099">
    <property type="entry name" value="protocadherin-19 isoform X2"/>
    <property type="match status" value="1"/>
</dbReference>
<dbReference type="Gene3D" id="2.60.40.60">
    <property type="entry name" value="Cadherins"/>
    <property type="match status" value="6"/>
</dbReference>
<dbReference type="InterPro" id="IPR002126">
    <property type="entry name" value="Cadherin-like_dom"/>
</dbReference>
<dbReference type="InterPro" id="IPR015919">
    <property type="entry name" value="Cadherin-like_sf"/>
</dbReference>
<dbReference type="InterPro" id="IPR020894">
    <property type="entry name" value="Cadherin_CS"/>
</dbReference>
<dbReference type="InterPro" id="IPR013164">
    <property type="entry name" value="Cadherin_N"/>
</dbReference>
<dbReference type="InterPro" id="IPR050174">
    <property type="entry name" value="Protocadherin/Cadherin-CA"/>
</dbReference>
<dbReference type="PANTHER" id="PTHR24028">
    <property type="entry name" value="CADHERIN-87A"/>
    <property type="match status" value="1"/>
</dbReference>
<dbReference type="PANTHER" id="PTHR24028:SF40">
    <property type="entry name" value="PROTOCADHERIN-19"/>
    <property type="match status" value="1"/>
</dbReference>
<dbReference type="Pfam" id="PF00028">
    <property type="entry name" value="Cadherin"/>
    <property type="match status" value="5"/>
</dbReference>
<dbReference type="Pfam" id="PF08266">
    <property type="entry name" value="Cadherin_2"/>
    <property type="match status" value="1"/>
</dbReference>
<dbReference type="PRINTS" id="PR00205">
    <property type="entry name" value="CADHERIN"/>
</dbReference>
<dbReference type="SMART" id="SM00112">
    <property type="entry name" value="CA"/>
    <property type="match status" value="6"/>
</dbReference>
<dbReference type="SUPFAM" id="SSF49313">
    <property type="entry name" value="Cadherin-like"/>
    <property type="match status" value="5"/>
</dbReference>
<dbReference type="PROSITE" id="PS50268">
    <property type="entry name" value="CADHERIN_2"/>
    <property type="match status" value="6"/>
</dbReference>